<proteinExistence type="evidence at transcript level"/>
<comment type="function">
    <text evidence="1">May play a role in signal transduction pathways that involve calcium as a second messenger.</text>
</comment>
<comment type="catalytic activity">
    <reaction evidence="11">
        <text>L-seryl-[protein] + ATP = O-phospho-L-seryl-[protein] + ADP + H(+)</text>
        <dbReference type="Rhea" id="RHEA:17989"/>
        <dbReference type="Rhea" id="RHEA-COMP:9863"/>
        <dbReference type="Rhea" id="RHEA-COMP:11604"/>
        <dbReference type="ChEBI" id="CHEBI:15378"/>
        <dbReference type="ChEBI" id="CHEBI:29999"/>
        <dbReference type="ChEBI" id="CHEBI:30616"/>
        <dbReference type="ChEBI" id="CHEBI:83421"/>
        <dbReference type="ChEBI" id="CHEBI:456216"/>
        <dbReference type="EC" id="2.7.11.1"/>
    </reaction>
</comment>
<comment type="catalytic activity">
    <reaction evidence="11">
        <text>L-threonyl-[protein] + ATP = O-phospho-L-threonyl-[protein] + ADP + H(+)</text>
        <dbReference type="Rhea" id="RHEA:46608"/>
        <dbReference type="Rhea" id="RHEA-COMP:11060"/>
        <dbReference type="Rhea" id="RHEA-COMP:11605"/>
        <dbReference type="ChEBI" id="CHEBI:15378"/>
        <dbReference type="ChEBI" id="CHEBI:30013"/>
        <dbReference type="ChEBI" id="CHEBI:30616"/>
        <dbReference type="ChEBI" id="CHEBI:61977"/>
        <dbReference type="ChEBI" id="CHEBI:456216"/>
        <dbReference type="EC" id="2.7.11.1"/>
    </reaction>
</comment>
<comment type="activity regulation">
    <text evidence="1">Activated by calcium. Autophosphorylation may play an important role in the regulation of the kinase activity.</text>
</comment>
<comment type="subcellular location">
    <subcellularLocation>
        <location evidence="11">Membrane</location>
        <topology evidence="11">Lipid-anchor</topology>
    </subcellularLocation>
</comment>
<comment type="tissue specificity">
    <text evidence="7">Expressed in root tips, leaf veins, mesophyll cells, flower reproductive organs and mature pollen grains.</text>
</comment>
<comment type="induction">
    <text evidence="7">Down-regulated by white light in leaves.</text>
</comment>
<comment type="domain">
    <text evidence="1">There are 3 contiguous domains conserved in the CDPK subfamily: a kinase domain, an autoinhibitory (junction) domain and a calmodulin-like domain. The autoinhibitory domain (348-378) inactivates kinase activity under calcium-free conditions.</text>
</comment>
<comment type="similarity">
    <text evidence="11">Belongs to the protein kinase superfamily. Ser/Thr protein kinase family. CDPK subfamily.</text>
</comment>
<reference key="1">
    <citation type="journal article" date="1995" name="Plant Mol. Biol.">
        <title>Molecular cloning of two novel rice cDNA sequences encoding putative calcium-dependent protein kinases.</title>
        <authorList>
            <person name="Breviario D."/>
            <person name="Morello L."/>
            <person name="Giani S."/>
        </authorList>
    </citation>
    <scope>NUCLEOTIDE SEQUENCE [MRNA]</scope>
    <source>
        <strain>cv. Arborio</strain>
        <tissue>Coleoptile</tissue>
    </source>
</reference>
<reference key="2">
    <citation type="journal article" date="2005" name="Nature">
        <title>The map-based sequence of the rice genome.</title>
        <authorList>
            <consortium name="International rice genome sequencing project (IRGSP)"/>
        </authorList>
    </citation>
    <scope>NUCLEOTIDE SEQUENCE [LARGE SCALE GENOMIC DNA]</scope>
    <source>
        <strain>cv. Nipponbare</strain>
    </source>
</reference>
<reference key="3">
    <citation type="journal article" date="2008" name="Nucleic Acids Res.">
        <title>The rice annotation project database (RAP-DB): 2008 update.</title>
        <authorList>
            <consortium name="The rice annotation project (RAP)"/>
        </authorList>
    </citation>
    <scope>GENOME REANNOTATION</scope>
    <source>
        <strain>cv. Nipponbare</strain>
    </source>
</reference>
<reference key="4">
    <citation type="journal article" date="2013" name="Rice">
        <title>Improvement of the Oryza sativa Nipponbare reference genome using next generation sequence and optical map data.</title>
        <authorList>
            <person name="Kawahara Y."/>
            <person name="de la Bastide M."/>
            <person name="Hamilton J.P."/>
            <person name="Kanamori H."/>
            <person name="McCombie W.R."/>
            <person name="Ouyang S."/>
            <person name="Schwartz D.C."/>
            <person name="Tanaka T."/>
            <person name="Wu J."/>
            <person name="Zhou S."/>
            <person name="Childs K.L."/>
            <person name="Davidson R.M."/>
            <person name="Lin H."/>
            <person name="Quesada-Ocampo L."/>
            <person name="Vaillancourt B."/>
            <person name="Sakai H."/>
            <person name="Lee S.S."/>
            <person name="Kim J."/>
            <person name="Numa H."/>
            <person name="Itoh T."/>
            <person name="Buell C.R."/>
            <person name="Matsumoto T."/>
        </authorList>
    </citation>
    <scope>GENOME REANNOTATION</scope>
    <source>
        <strain>cv. Nipponbare</strain>
    </source>
</reference>
<reference key="5">
    <citation type="journal article" date="2005" name="Plant Cell Physiol.">
        <title>Genome-wide identification of the rice calcium-dependent protein kinase and its closely related kinase gene families: comprehensive analysis of the CDPKs gene family in rice.</title>
        <authorList>
            <person name="Asano T."/>
            <person name="Tanaka N."/>
            <person name="Yang G."/>
            <person name="Hayashi N."/>
            <person name="Komatsu S."/>
        </authorList>
    </citation>
    <scope>GENE FAMILY</scope>
    <scope>NOMENCLATURE</scope>
</reference>
<reference key="6">
    <citation type="journal article" date="2006" name="Planta">
        <title>Functional analysis of DNA sequences controlling the expression of the rice OsCDPK2 gene.</title>
        <authorList>
            <person name="Morello L."/>
            <person name="Bardini M."/>
            <person name="Cricri M."/>
            <person name="Sala F."/>
            <person name="Breviario D."/>
        </authorList>
    </citation>
    <scope>TISSUE SPECIFICITY</scope>
    <scope>INDUCTION</scope>
</reference>
<protein>
    <recommendedName>
        <fullName evidence="11">Calcium-dependent protein kinase 19</fullName>
        <shortName evidence="11">OsCDPK19</shortName>
        <shortName evidence="8">OsCPK19</shortName>
        <ecNumber evidence="11">2.7.11.1</ecNumber>
    </recommendedName>
    <alternativeName>
        <fullName evidence="11">Calcium-dependent protein kinase isoform 2</fullName>
        <shortName evidence="9">OsCDPK2</shortName>
        <shortName evidence="10">OsCPK2</shortName>
    </alternativeName>
</protein>
<evidence type="ECO:0000250" key="1">
    <source>
        <dbReference type="UniProtKB" id="Q06850"/>
    </source>
</evidence>
<evidence type="ECO:0000255" key="2"/>
<evidence type="ECO:0000255" key="3">
    <source>
        <dbReference type="PROSITE-ProRule" id="PRU00159"/>
    </source>
</evidence>
<evidence type="ECO:0000255" key="4">
    <source>
        <dbReference type="PROSITE-ProRule" id="PRU00448"/>
    </source>
</evidence>
<evidence type="ECO:0000255" key="5">
    <source>
        <dbReference type="PROSITE-ProRule" id="PRU10027"/>
    </source>
</evidence>
<evidence type="ECO:0000256" key="6">
    <source>
        <dbReference type="SAM" id="MobiDB-lite"/>
    </source>
</evidence>
<evidence type="ECO:0000269" key="7">
    <source>
    </source>
</evidence>
<evidence type="ECO:0000303" key="8">
    <source>
    </source>
</evidence>
<evidence type="ECO:0000303" key="9">
    <source>
    </source>
</evidence>
<evidence type="ECO:0000303" key="10">
    <source>
    </source>
</evidence>
<evidence type="ECO:0000305" key="11"/>
<evidence type="ECO:0000312" key="12">
    <source>
        <dbReference type="EMBL" id="BAC20693.1"/>
    </source>
</evidence>
<evidence type="ECO:0000312" key="13">
    <source>
        <dbReference type="EMBL" id="BAT01749.1"/>
    </source>
</evidence>
<feature type="initiator methionine" description="Removed" evidence="2">
    <location>
        <position position="1"/>
    </location>
</feature>
<feature type="chain" id="PRO_0000085830" description="Calcium-dependent protein kinase 19">
    <location>
        <begin position="2"/>
        <end position="533"/>
    </location>
</feature>
<feature type="domain" description="Protein kinase" evidence="3">
    <location>
        <begin position="85"/>
        <end position="343"/>
    </location>
</feature>
<feature type="domain" description="EF-hand 1" evidence="4">
    <location>
        <begin position="385"/>
        <end position="420"/>
    </location>
</feature>
<feature type="domain" description="EF-hand 2" evidence="4">
    <location>
        <begin position="421"/>
        <end position="456"/>
    </location>
</feature>
<feature type="domain" description="EF-hand 3" evidence="4">
    <location>
        <begin position="457"/>
        <end position="492"/>
    </location>
</feature>
<feature type="domain" description="EF-hand 4" evidence="4">
    <location>
        <begin position="497"/>
        <end position="527"/>
    </location>
</feature>
<feature type="region of interest" description="Disordered" evidence="6">
    <location>
        <begin position="1"/>
        <end position="53"/>
    </location>
</feature>
<feature type="region of interest" description="Autoinhibitory domain" evidence="1">
    <location>
        <begin position="348"/>
        <end position="378"/>
    </location>
</feature>
<feature type="compositionally biased region" description="Polar residues" evidence="6">
    <location>
        <begin position="1"/>
        <end position="12"/>
    </location>
</feature>
<feature type="compositionally biased region" description="Polar residues" evidence="6">
    <location>
        <begin position="24"/>
        <end position="38"/>
    </location>
</feature>
<feature type="active site" description="Proton acceptor" evidence="3 5">
    <location>
        <position position="209"/>
    </location>
</feature>
<feature type="binding site" evidence="3">
    <location>
        <begin position="91"/>
        <end position="99"/>
    </location>
    <ligand>
        <name>ATP</name>
        <dbReference type="ChEBI" id="CHEBI:30616"/>
    </ligand>
</feature>
<feature type="binding site" evidence="3">
    <location>
        <position position="114"/>
    </location>
    <ligand>
        <name>ATP</name>
        <dbReference type="ChEBI" id="CHEBI:30616"/>
    </ligand>
</feature>
<feature type="binding site" evidence="4">
    <location>
        <position position="398"/>
    </location>
    <ligand>
        <name>Ca(2+)</name>
        <dbReference type="ChEBI" id="CHEBI:29108"/>
        <label>1</label>
    </ligand>
</feature>
<feature type="binding site" evidence="4">
    <location>
        <position position="400"/>
    </location>
    <ligand>
        <name>Ca(2+)</name>
        <dbReference type="ChEBI" id="CHEBI:29108"/>
        <label>1</label>
    </ligand>
</feature>
<feature type="binding site" evidence="4">
    <location>
        <position position="402"/>
    </location>
    <ligand>
        <name>Ca(2+)</name>
        <dbReference type="ChEBI" id="CHEBI:29108"/>
        <label>1</label>
    </ligand>
</feature>
<feature type="binding site" evidence="4">
    <location>
        <position position="404"/>
    </location>
    <ligand>
        <name>Ca(2+)</name>
        <dbReference type="ChEBI" id="CHEBI:29108"/>
        <label>1</label>
    </ligand>
</feature>
<feature type="binding site" evidence="4">
    <location>
        <position position="409"/>
    </location>
    <ligand>
        <name>Ca(2+)</name>
        <dbReference type="ChEBI" id="CHEBI:29108"/>
        <label>1</label>
    </ligand>
</feature>
<feature type="binding site" evidence="4">
    <location>
        <position position="434"/>
    </location>
    <ligand>
        <name>Ca(2+)</name>
        <dbReference type="ChEBI" id="CHEBI:29108"/>
        <label>2</label>
    </ligand>
</feature>
<feature type="binding site" evidence="4">
    <location>
        <position position="436"/>
    </location>
    <ligand>
        <name>Ca(2+)</name>
        <dbReference type="ChEBI" id="CHEBI:29108"/>
        <label>2</label>
    </ligand>
</feature>
<feature type="binding site" evidence="4">
    <location>
        <position position="438"/>
    </location>
    <ligand>
        <name>Ca(2+)</name>
        <dbReference type="ChEBI" id="CHEBI:29108"/>
        <label>2</label>
    </ligand>
</feature>
<feature type="binding site" evidence="4">
    <location>
        <position position="440"/>
    </location>
    <ligand>
        <name>Ca(2+)</name>
        <dbReference type="ChEBI" id="CHEBI:29108"/>
        <label>2</label>
    </ligand>
</feature>
<feature type="binding site" evidence="4">
    <location>
        <position position="445"/>
    </location>
    <ligand>
        <name>Ca(2+)</name>
        <dbReference type="ChEBI" id="CHEBI:29108"/>
        <label>2</label>
    </ligand>
</feature>
<feature type="binding site" evidence="4">
    <location>
        <position position="470"/>
    </location>
    <ligand>
        <name>Ca(2+)</name>
        <dbReference type="ChEBI" id="CHEBI:29108"/>
        <label>3</label>
    </ligand>
</feature>
<feature type="binding site" evidence="4">
    <location>
        <position position="472"/>
    </location>
    <ligand>
        <name>Ca(2+)</name>
        <dbReference type="ChEBI" id="CHEBI:29108"/>
        <label>3</label>
    </ligand>
</feature>
<feature type="binding site" evidence="4">
    <location>
        <position position="474"/>
    </location>
    <ligand>
        <name>Ca(2+)</name>
        <dbReference type="ChEBI" id="CHEBI:29108"/>
        <label>3</label>
    </ligand>
</feature>
<feature type="binding site" evidence="4">
    <location>
        <position position="481"/>
    </location>
    <ligand>
        <name>Ca(2+)</name>
        <dbReference type="ChEBI" id="CHEBI:29108"/>
        <label>3</label>
    </ligand>
</feature>
<feature type="binding site" evidence="4">
    <location>
        <position position="505"/>
    </location>
    <ligand>
        <name>Ca(2+)</name>
        <dbReference type="ChEBI" id="CHEBI:29108"/>
        <label>4</label>
    </ligand>
</feature>
<feature type="binding site" evidence="4">
    <location>
        <position position="507"/>
    </location>
    <ligand>
        <name>Ca(2+)</name>
        <dbReference type="ChEBI" id="CHEBI:29108"/>
        <label>4</label>
    </ligand>
</feature>
<feature type="binding site" evidence="4">
    <location>
        <position position="509"/>
    </location>
    <ligand>
        <name>Ca(2+)</name>
        <dbReference type="ChEBI" id="CHEBI:29108"/>
        <label>4</label>
    </ligand>
</feature>
<feature type="binding site" evidence="4">
    <location>
        <position position="511"/>
    </location>
    <ligand>
        <name>Ca(2+)</name>
        <dbReference type="ChEBI" id="CHEBI:29108"/>
        <label>4</label>
    </ligand>
</feature>
<feature type="binding site" evidence="4">
    <location>
        <position position="516"/>
    </location>
    <ligand>
        <name>Ca(2+)</name>
        <dbReference type="ChEBI" id="CHEBI:29108"/>
        <label>4</label>
    </ligand>
</feature>
<feature type="lipid moiety-binding region" description="N-myristoyl glycine" evidence="2">
    <location>
        <position position="2"/>
    </location>
</feature>
<feature type="sequence conflict" description="In Ref. 1; CAA57157." evidence="11" ref="1">
    <original>P</original>
    <variation>L</variation>
    <location>
        <position position="77"/>
    </location>
</feature>
<accession>P53683</accession>
<accession>Q0D634</accession>
<accession>Q8GTY8</accession>
<organism>
    <name type="scientific">Oryza sativa subsp. japonica</name>
    <name type="common">Rice</name>
    <dbReference type="NCBI Taxonomy" id="39947"/>
    <lineage>
        <taxon>Eukaryota</taxon>
        <taxon>Viridiplantae</taxon>
        <taxon>Streptophyta</taxon>
        <taxon>Embryophyta</taxon>
        <taxon>Tracheophyta</taxon>
        <taxon>Spermatophyta</taxon>
        <taxon>Magnoliopsida</taxon>
        <taxon>Liliopsida</taxon>
        <taxon>Poales</taxon>
        <taxon>Poaceae</taxon>
        <taxon>BOP clade</taxon>
        <taxon>Oryzoideae</taxon>
        <taxon>Oryzeae</taxon>
        <taxon>Oryzinae</taxon>
        <taxon>Oryza</taxon>
        <taxon>Oryza sativa</taxon>
    </lineage>
</organism>
<dbReference type="EC" id="2.7.11.1" evidence="11"/>
<dbReference type="EMBL" id="X81394">
    <property type="protein sequence ID" value="CAA57157.1"/>
    <property type="molecule type" value="mRNA"/>
</dbReference>
<dbReference type="EMBL" id="AP004269">
    <property type="protein sequence ID" value="BAC20693.1"/>
    <property type="molecule type" value="Genomic_DNA"/>
</dbReference>
<dbReference type="EMBL" id="AP008213">
    <property type="protein sequence ID" value="BAF21689.1"/>
    <property type="molecule type" value="Genomic_DNA"/>
</dbReference>
<dbReference type="EMBL" id="AP014963">
    <property type="protein sequence ID" value="BAT01749.1"/>
    <property type="molecule type" value="Genomic_DNA"/>
</dbReference>
<dbReference type="PIR" id="S56652">
    <property type="entry name" value="S56652"/>
</dbReference>
<dbReference type="RefSeq" id="NP_001390030.1">
    <property type="nucleotide sequence ID" value="NM_001403101.1"/>
</dbReference>
<dbReference type="RefSeq" id="NP_001390031.1">
    <property type="nucleotide sequence ID" value="NM_001403102.1"/>
</dbReference>
<dbReference type="RefSeq" id="XP_015646655.1">
    <property type="nucleotide sequence ID" value="XM_015791169.1"/>
</dbReference>
<dbReference type="RefSeq" id="XP_015646656.1">
    <property type="nucleotide sequence ID" value="XM_015791170.1"/>
</dbReference>
<dbReference type="RefSeq" id="XP_066168079.1">
    <property type="nucleotide sequence ID" value="XM_066311982.1"/>
</dbReference>
<dbReference type="SMR" id="P53683"/>
<dbReference type="FunCoup" id="P53683">
    <property type="interactions" value="2310"/>
</dbReference>
<dbReference type="STRING" id="39947.P53683"/>
<dbReference type="SwissPalm" id="P53683"/>
<dbReference type="PaxDb" id="39947-P53683"/>
<dbReference type="EnsemblPlants" id="Os07t0515100-01">
    <property type="protein sequence ID" value="Os07t0515100-01"/>
    <property type="gene ID" value="Os07g0515100"/>
</dbReference>
<dbReference type="EnsemblPlants" id="Os07t0515100-02">
    <property type="protein sequence ID" value="Os07t0515100-02"/>
    <property type="gene ID" value="Os07g0515100"/>
</dbReference>
<dbReference type="GeneID" id="4343373"/>
<dbReference type="Gramene" id="Os07t0515100-01">
    <property type="protein sequence ID" value="Os07t0515100-01"/>
    <property type="gene ID" value="Os07g0515100"/>
</dbReference>
<dbReference type="Gramene" id="Os07t0515100-02">
    <property type="protein sequence ID" value="Os07t0515100-02"/>
    <property type="gene ID" value="Os07g0515100"/>
</dbReference>
<dbReference type="KEGG" id="dosa:Os07g0515100"/>
<dbReference type="eggNOG" id="KOG0032">
    <property type="taxonomic scope" value="Eukaryota"/>
</dbReference>
<dbReference type="HOGENOM" id="CLU_000288_37_4_1"/>
<dbReference type="InParanoid" id="P53683"/>
<dbReference type="OMA" id="CMELCAG"/>
<dbReference type="OrthoDB" id="40902at2759"/>
<dbReference type="BRENDA" id="2.7.11.1">
    <property type="organism ID" value="4460"/>
</dbReference>
<dbReference type="Proteomes" id="UP000000763">
    <property type="component" value="Chromosome 7"/>
</dbReference>
<dbReference type="Proteomes" id="UP000059680">
    <property type="component" value="Chromosome 7"/>
</dbReference>
<dbReference type="GO" id="GO:0005737">
    <property type="term" value="C:cytoplasm"/>
    <property type="evidence" value="ECO:0000318"/>
    <property type="project" value="GO_Central"/>
</dbReference>
<dbReference type="GO" id="GO:0016020">
    <property type="term" value="C:membrane"/>
    <property type="evidence" value="ECO:0007669"/>
    <property type="project" value="UniProtKB-SubCell"/>
</dbReference>
<dbReference type="GO" id="GO:0005634">
    <property type="term" value="C:nucleus"/>
    <property type="evidence" value="ECO:0000318"/>
    <property type="project" value="GO_Central"/>
</dbReference>
<dbReference type="GO" id="GO:0005524">
    <property type="term" value="F:ATP binding"/>
    <property type="evidence" value="ECO:0007669"/>
    <property type="project" value="UniProtKB-KW"/>
</dbReference>
<dbReference type="GO" id="GO:0005509">
    <property type="term" value="F:calcium ion binding"/>
    <property type="evidence" value="ECO:0007669"/>
    <property type="project" value="InterPro"/>
</dbReference>
<dbReference type="GO" id="GO:0009931">
    <property type="term" value="F:calcium-dependent protein serine/threonine kinase activity"/>
    <property type="evidence" value="ECO:0000318"/>
    <property type="project" value="GO_Central"/>
</dbReference>
<dbReference type="GO" id="GO:0004683">
    <property type="term" value="F:calcium/calmodulin-dependent protein kinase activity"/>
    <property type="evidence" value="ECO:0000318"/>
    <property type="project" value="GO_Central"/>
</dbReference>
<dbReference type="GO" id="GO:0005516">
    <property type="term" value="F:calmodulin binding"/>
    <property type="evidence" value="ECO:0000318"/>
    <property type="project" value="GO_Central"/>
</dbReference>
<dbReference type="GO" id="GO:0106310">
    <property type="term" value="F:protein serine kinase activity"/>
    <property type="evidence" value="ECO:0007669"/>
    <property type="project" value="RHEA"/>
</dbReference>
<dbReference type="GO" id="GO:0035556">
    <property type="term" value="P:intracellular signal transduction"/>
    <property type="evidence" value="ECO:0000318"/>
    <property type="project" value="GO_Central"/>
</dbReference>
<dbReference type="CDD" id="cd05117">
    <property type="entry name" value="STKc_CAMK"/>
    <property type="match status" value="1"/>
</dbReference>
<dbReference type="FunFam" id="1.10.238.10:FF:000015">
    <property type="entry name" value="Calcium-dependent protein kinase 1"/>
    <property type="match status" value="1"/>
</dbReference>
<dbReference type="FunFam" id="3.30.200.20:FF:000004">
    <property type="entry name" value="Calcium-dependent protein kinase 1"/>
    <property type="match status" value="1"/>
</dbReference>
<dbReference type="FunFam" id="1.10.510.10:FF:000056">
    <property type="entry name" value="calcium-dependent protein kinase 1"/>
    <property type="match status" value="1"/>
</dbReference>
<dbReference type="Gene3D" id="1.10.238.10">
    <property type="entry name" value="EF-hand"/>
    <property type="match status" value="2"/>
</dbReference>
<dbReference type="Gene3D" id="3.30.200.20">
    <property type="entry name" value="Phosphorylase Kinase, domain 1"/>
    <property type="match status" value="1"/>
</dbReference>
<dbReference type="Gene3D" id="1.10.510.10">
    <property type="entry name" value="Transferase(Phosphotransferase) domain 1"/>
    <property type="match status" value="1"/>
</dbReference>
<dbReference type="InterPro" id="IPR050205">
    <property type="entry name" value="CDPK_Ser/Thr_kinases"/>
</dbReference>
<dbReference type="InterPro" id="IPR011992">
    <property type="entry name" value="EF-hand-dom_pair"/>
</dbReference>
<dbReference type="InterPro" id="IPR018247">
    <property type="entry name" value="EF_Hand_1_Ca_BS"/>
</dbReference>
<dbReference type="InterPro" id="IPR002048">
    <property type="entry name" value="EF_hand_dom"/>
</dbReference>
<dbReference type="InterPro" id="IPR011009">
    <property type="entry name" value="Kinase-like_dom_sf"/>
</dbReference>
<dbReference type="InterPro" id="IPR000719">
    <property type="entry name" value="Prot_kinase_dom"/>
</dbReference>
<dbReference type="InterPro" id="IPR017441">
    <property type="entry name" value="Protein_kinase_ATP_BS"/>
</dbReference>
<dbReference type="InterPro" id="IPR008271">
    <property type="entry name" value="Ser/Thr_kinase_AS"/>
</dbReference>
<dbReference type="PANTHER" id="PTHR24349">
    <property type="entry name" value="SERINE/THREONINE-PROTEIN KINASE"/>
    <property type="match status" value="1"/>
</dbReference>
<dbReference type="Pfam" id="PF13499">
    <property type="entry name" value="EF-hand_7"/>
    <property type="match status" value="2"/>
</dbReference>
<dbReference type="Pfam" id="PF00069">
    <property type="entry name" value="Pkinase"/>
    <property type="match status" value="1"/>
</dbReference>
<dbReference type="SMART" id="SM00054">
    <property type="entry name" value="EFh"/>
    <property type="match status" value="4"/>
</dbReference>
<dbReference type="SMART" id="SM00220">
    <property type="entry name" value="S_TKc"/>
    <property type="match status" value="1"/>
</dbReference>
<dbReference type="SUPFAM" id="SSF47473">
    <property type="entry name" value="EF-hand"/>
    <property type="match status" value="1"/>
</dbReference>
<dbReference type="SUPFAM" id="SSF56112">
    <property type="entry name" value="Protein kinase-like (PK-like)"/>
    <property type="match status" value="1"/>
</dbReference>
<dbReference type="PROSITE" id="PS00018">
    <property type="entry name" value="EF_HAND_1"/>
    <property type="match status" value="4"/>
</dbReference>
<dbReference type="PROSITE" id="PS50222">
    <property type="entry name" value="EF_HAND_2"/>
    <property type="match status" value="4"/>
</dbReference>
<dbReference type="PROSITE" id="PS00107">
    <property type="entry name" value="PROTEIN_KINASE_ATP"/>
    <property type="match status" value="1"/>
</dbReference>
<dbReference type="PROSITE" id="PS50011">
    <property type="entry name" value="PROTEIN_KINASE_DOM"/>
    <property type="match status" value="1"/>
</dbReference>
<dbReference type="PROSITE" id="PS00108">
    <property type="entry name" value="PROTEIN_KINASE_ST"/>
    <property type="match status" value="1"/>
</dbReference>
<keyword id="KW-0067">ATP-binding</keyword>
<keyword id="KW-0106">Calcium</keyword>
<keyword id="KW-0418">Kinase</keyword>
<keyword id="KW-0449">Lipoprotein</keyword>
<keyword id="KW-0472">Membrane</keyword>
<keyword id="KW-0479">Metal-binding</keyword>
<keyword id="KW-0519">Myristate</keyword>
<keyword id="KW-0547">Nucleotide-binding</keyword>
<keyword id="KW-0597">Phosphoprotein</keyword>
<keyword id="KW-1185">Reference proteome</keyword>
<keyword id="KW-0677">Repeat</keyword>
<keyword id="KW-0723">Serine/threonine-protein kinase</keyword>
<keyword id="KW-0808">Transferase</keyword>
<sequence>MGSCCSRATSPDSGRGGANGYGYSHQTKPAQTTPSYNHPQPPPPAEVRYTPSAMNPPVVPPVVAPPKPTPDTILGKPYDDVRSVYSLGKELGRGQFGVTYLCTEIASGKQYACKSISKRKLVSKADKEDIRREIQIMQHLSGQQNIVEFRGAYEDKSNVHVVMELCAGGELFDRIIAKGHYSERAAATICRAVVNVVNICHFMGVMHRDLKPENFLLATKEENAMLKATDFGLSVFIEEGKMYRDIVGSAYYVAPEVLRRNYGKEIDVWSAGVILYILLSGVPPFWAETEKGIFDAILQGEIDFESQPWPSISESAKDLVRKMLTQDPKKRITSAQVLQHPWLRDGEASDKPIDSAVLSRMKQFRAMNKLKKMALKVIASNLNEEEIKGLKQMFTNMDTDNSGTITYEELKAGLAKLGSKLSEAEVKQLMEAADVDGNGSIDYVEFITATMHRHKLERDEHLFKAFQYFDKDNSGFITRDELESALIEHEMGDTSTIKDIISEVDTDNDGRINYEEFCAMMRGGGMQQPMRLK</sequence>
<gene>
    <name evidence="8" type="primary">CPK19</name>
    <name evidence="10" type="synonym">CPK2</name>
    <name evidence="13" type="ordered locus">Os07g0515100</name>
    <name evidence="11" type="ordered locus">LOC_Os07g33110</name>
    <name evidence="12" type="ORF">P0048D08.112</name>
</gene>
<name>CDPKJ_ORYSJ</name>